<gene>
    <name type="primary">RPS4Y1</name>
    <name type="synonym">RPS4Y</name>
    <name type="ORF">PRO2646</name>
</gene>
<evidence type="ECO:0000303" key="1">
    <source>
    </source>
</evidence>
<evidence type="ECO:0000305" key="2"/>
<sequence>MARGPKKHLKRVAAPKHWMLDKLTGVFAPRPSTGPHKLRECLPLIVFLRNRLKYALTGDEVKKICMQRFIKIDGKVRVDVTYPAGFMDVISIEKTGEHFRLVYDTKGRFAVHRITVEEAKYKLCKVRKITVGVKGIPHLVTHDARTIRYPDPVIKVNDTVQIDLGTGKIINFIKFDTGNLCMVIGGANLGRVGVITNRERHPGSFDVVHVKDANGNSFATRLSNIFVIGNGNKPWISLPRGKGIRLTVAEERDKRLATKQSSG</sequence>
<keyword id="KW-0002">3D-structure</keyword>
<keyword id="KW-1267">Proteomics identification</keyword>
<keyword id="KW-1185">Reference proteome</keyword>
<keyword id="KW-0687">Ribonucleoprotein</keyword>
<keyword id="KW-0689">Ribosomal protein</keyword>
<keyword id="KW-0694">RNA-binding</keyword>
<keyword id="KW-0699">rRNA-binding</keyword>
<feature type="chain" id="PRO_0000130812" description="Small ribosomal subunit protein eS4, Y isoform 1">
    <location>
        <begin position="1"/>
        <end position="263"/>
    </location>
</feature>
<feature type="domain" description="S4 RNA-binding">
    <location>
        <begin position="42"/>
        <end position="104"/>
    </location>
</feature>
<proteinExistence type="evidence at protein level"/>
<accession>P22090</accession>
<accession>A8K9V4</accession>
<reference key="1">
    <citation type="journal article" date="1990" name="Cell">
        <title>Homologous ribosomal protein genes on the human X and Y chromosomes: escape from X inactivation and possible implications for Turner syndrome.</title>
        <authorList>
            <person name="Fisher E.M.C."/>
            <person name="Beer-Romero P."/>
            <person name="Brown L.G."/>
            <person name="Ridley A."/>
            <person name="McNeil J.A."/>
            <person name="Lawrence J.B."/>
            <person name="Willard H.F."/>
            <person name="Bieber F.R."/>
            <person name="Page D.C."/>
        </authorList>
    </citation>
    <scope>NUCLEOTIDE SEQUENCE [MRNA]</scope>
</reference>
<reference key="2">
    <citation type="submission" date="1998-01" db="EMBL/GenBank/DDBJ databases">
        <authorList>
            <person name="Zuo L."/>
            <person name="Baybayan P."/>
            <person name="Kuang W.-J."/>
            <person name="Brown L."/>
            <person name="Page D."/>
            <person name="Chen E."/>
        </authorList>
    </citation>
    <scope>NUCLEOTIDE SEQUENCE [GENOMIC DNA]</scope>
</reference>
<reference key="3">
    <citation type="submission" date="1998-12" db="EMBL/GenBank/DDBJ databases">
        <title>Functional prediction of the coding sequences of 121 new genes deduced by analysis of cDNA clones from human fetal liver.</title>
        <authorList>
            <person name="Zhang C."/>
            <person name="Yu Y."/>
            <person name="Zhang S."/>
            <person name="Wei H."/>
            <person name="Zhou G."/>
            <person name="Ouyang S."/>
            <person name="Luo L."/>
            <person name="Bi J."/>
            <person name="Liu M."/>
            <person name="He F."/>
        </authorList>
    </citation>
    <scope>NUCLEOTIDE SEQUENCE [LARGE SCALE MRNA]</scope>
    <source>
        <tissue>Fetal liver</tissue>
    </source>
</reference>
<reference key="4">
    <citation type="journal article" date="2004" name="Nat. Genet.">
        <title>Complete sequencing and characterization of 21,243 full-length human cDNAs.</title>
        <authorList>
            <person name="Ota T."/>
            <person name="Suzuki Y."/>
            <person name="Nishikawa T."/>
            <person name="Otsuki T."/>
            <person name="Sugiyama T."/>
            <person name="Irie R."/>
            <person name="Wakamatsu A."/>
            <person name="Hayashi K."/>
            <person name="Sato H."/>
            <person name="Nagai K."/>
            <person name="Kimura K."/>
            <person name="Makita H."/>
            <person name="Sekine M."/>
            <person name="Obayashi M."/>
            <person name="Nishi T."/>
            <person name="Shibahara T."/>
            <person name="Tanaka T."/>
            <person name="Ishii S."/>
            <person name="Yamamoto J."/>
            <person name="Saito K."/>
            <person name="Kawai Y."/>
            <person name="Isono Y."/>
            <person name="Nakamura Y."/>
            <person name="Nagahari K."/>
            <person name="Murakami K."/>
            <person name="Yasuda T."/>
            <person name="Iwayanagi T."/>
            <person name="Wagatsuma M."/>
            <person name="Shiratori A."/>
            <person name="Sudo H."/>
            <person name="Hosoiri T."/>
            <person name="Kaku Y."/>
            <person name="Kodaira H."/>
            <person name="Kondo H."/>
            <person name="Sugawara M."/>
            <person name="Takahashi M."/>
            <person name="Kanda K."/>
            <person name="Yokoi T."/>
            <person name="Furuya T."/>
            <person name="Kikkawa E."/>
            <person name="Omura Y."/>
            <person name="Abe K."/>
            <person name="Kamihara K."/>
            <person name="Katsuta N."/>
            <person name="Sato K."/>
            <person name="Tanikawa M."/>
            <person name="Yamazaki M."/>
            <person name="Ninomiya K."/>
            <person name="Ishibashi T."/>
            <person name="Yamashita H."/>
            <person name="Murakawa K."/>
            <person name="Fujimori K."/>
            <person name="Tanai H."/>
            <person name="Kimata M."/>
            <person name="Watanabe M."/>
            <person name="Hiraoka S."/>
            <person name="Chiba Y."/>
            <person name="Ishida S."/>
            <person name="Ono Y."/>
            <person name="Takiguchi S."/>
            <person name="Watanabe S."/>
            <person name="Yosida M."/>
            <person name="Hotuta T."/>
            <person name="Kusano J."/>
            <person name="Kanehori K."/>
            <person name="Takahashi-Fujii A."/>
            <person name="Hara H."/>
            <person name="Tanase T.-O."/>
            <person name="Nomura Y."/>
            <person name="Togiya S."/>
            <person name="Komai F."/>
            <person name="Hara R."/>
            <person name="Takeuchi K."/>
            <person name="Arita M."/>
            <person name="Imose N."/>
            <person name="Musashino K."/>
            <person name="Yuuki H."/>
            <person name="Oshima A."/>
            <person name="Sasaki N."/>
            <person name="Aotsuka S."/>
            <person name="Yoshikawa Y."/>
            <person name="Matsunawa H."/>
            <person name="Ichihara T."/>
            <person name="Shiohata N."/>
            <person name="Sano S."/>
            <person name="Moriya S."/>
            <person name="Momiyama H."/>
            <person name="Satoh N."/>
            <person name="Takami S."/>
            <person name="Terashima Y."/>
            <person name="Suzuki O."/>
            <person name="Nakagawa S."/>
            <person name="Senoh A."/>
            <person name="Mizoguchi H."/>
            <person name="Goto Y."/>
            <person name="Shimizu F."/>
            <person name="Wakebe H."/>
            <person name="Hishigaki H."/>
            <person name="Watanabe T."/>
            <person name="Sugiyama A."/>
            <person name="Takemoto M."/>
            <person name="Kawakami B."/>
            <person name="Yamazaki M."/>
            <person name="Watanabe K."/>
            <person name="Kumagai A."/>
            <person name="Itakura S."/>
            <person name="Fukuzumi Y."/>
            <person name="Fujimori Y."/>
            <person name="Komiyama M."/>
            <person name="Tashiro H."/>
            <person name="Tanigami A."/>
            <person name="Fujiwara T."/>
            <person name="Ono T."/>
            <person name="Yamada K."/>
            <person name="Fujii Y."/>
            <person name="Ozaki K."/>
            <person name="Hirao M."/>
            <person name="Ohmori Y."/>
            <person name="Kawabata A."/>
            <person name="Hikiji T."/>
            <person name="Kobatake N."/>
            <person name="Inagaki H."/>
            <person name="Ikema Y."/>
            <person name="Okamoto S."/>
            <person name="Okitani R."/>
            <person name="Kawakami T."/>
            <person name="Noguchi S."/>
            <person name="Itoh T."/>
            <person name="Shigeta K."/>
            <person name="Senba T."/>
            <person name="Matsumura K."/>
            <person name="Nakajima Y."/>
            <person name="Mizuno T."/>
            <person name="Morinaga M."/>
            <person name="Sasaki M."/>
            <person name="Togashi T."/>
            <person name="Oyama M."/>
            <person name="Hata H."/>
            <person name="Watanabe M."/>
            <person name="Komatsu T."/>
            <person name="Mizushima-Sugano J."/>
            <person name="Satoh T."/>
            <person name="Shirai Y."/>
            <person name="Takahashi Y."/>
            <person name="Nakagawa K."/>
            <person name="Okumura K."/>
            <person name="Nagase T."/>
            <person name="Nomura N."/>
            <person name="Kikuchi H."/>
            <person name="Masuho Y."/>
            <person name="Yamashita R."/>
            <person name="Nakai K."/>
            <person name="Yada T."/>
            <person name="Nakamura Y."/>
            <person name="Ohara O."/>
            <person name="Isogai T."/>
            <person name="Sugano S."/>
        </authorList>
    </citation>
    <scope>NUCLEOTIDE SEQUENCE [LARGE SCALE MRNA]</scope>
    <source>
        <tissue>Trachea</tissue>
    </source>
</reference>
<reference key="5">
    <citation type="submission" date="2005-07" db="EMBL/GenBank/DDBJ databases">
        <authorList>
            <person name="Mural R.J."/>
            <person name="Istrail S."/>
            <person name="Sutton G.G."/>
            <person name="Florea L."/>
            <person name="Halpern A.L."/>
            <person name="Mobarry C.M."/>
            <person name="Lippert R."/>
            <person name="Walenz B."/>
            <person name="Shatkay H."/>
            <person name="Dew I."/>
            <person name="Miller J.R."/>
            <person name="Flanigan M.J."/>
            <person name="Edwards N.J."/>
            <person name="Bolanos R."/>
            <person name="Fasulo D."/>
            <person name="Halldorsson B.V."/>
            <person name="Hannenhalli S."/>
            <person name="Turner R."/>
            <person name="Yooseph S."/>
            <person name="Lu F."/>
            <person name="Nusskern D.R."/>
            <person name="Shue B.C."/>
            <person name="Zheng X.H."/>
            <person name="Zhong F."/>
            <person name="Delcher A.L."/>
            <person name="Huson D.H."/>
            <person name="Kravitz S.A."/>
            <person name="Mouchard L."/>
            <person name="Reinert K."/>
            <person name="Remington K.A."/>
            <person name="Clark A.G."/>
            <person name="Waterman M.S."/>
            <person name="Eichler E.E."/>
            <person name="Adams M.D."/>
            <person name="Hunkapiller M.W."/>
            <person name="Myers E.W."/>
            <person name="Venter J.C."/>
        </authorList>
    </citation>
    <scope>NUCLEOTIDE SEQUENCE [LARGE SCALE GENOMIC DNA]</scope>
</reference>
<reference key="6">
    <citation type="journal article" date="2004" name="Genome Res.">
        <title>The status, quality, and expansion of the NIH full-length cDNA project: the Mammalian Gene Collection (MGC).</title>
        <authorList>
            <consortium name="The MGC Project Team"/>
        </authorList>
    </citation>
    <scope>NUCLEOTIDE SEQUENCE [LARGE SCALE MRNA]</scope>
    <source>
        <tissue>Placenta</tissue>
    </source>
</reference>
<reference key="7">
    <citation type="journal article" date="2011" name="BMC Syst. Biol.">
        <title>Initial characterization of the human central proteome.</title>
        <authorList>
            <person name="Burkard T.R."/>
            <person name="Planyavsky M."/>
            <person name="Kaupe I."/>
            <person name="Breitwieser F.P."/>
            <person name="Buerckstuemmer T."/>
            <person name="Bennett K.L."/>
            <person name="Superti-Furga G."/>
            <person name="Colinge J."/>
        </authorList>
    </citation>
    <scope>IDENTIFICATION BY MASS SPECTROMETRY [LARGE SCALE ANALYSIS]</scope>
</reference>
<reference key="8">
    <citation type="journal article" date="2014" name="Curr. Opin. Struct. Biol.">
        <title>A new system for naming ribosomal proteins.</title>
        <authorList>
            <person name="Ban N."/>
            <person name="Beckmann R."/>
            <person name="Cate J.H.D."/>
            <person name="Dinman J.D."/>
            <person name="Dragon F."/>
            <person name="Ellis S.R."/>
            <person name="Lafontaine D.L.J."/>
            <person name="Lindahl L."/>
            <person name="Liljas A."/>
            <person name="Lipton J.M."/>
            <person name="McAlear M.A."/>
            <person name="Moore P.B."/>
            <person name="Noller H.F."/>
            <person name="Ortega J."/>
            <person name="Panse V.G."/>
            <person name="Ramakrishnan V."/>
            <person name="Spahn C.M.T."/>
            <person name="Steitz T.A."/>
            <person name="Tchorzewski M."/>
            <person name="Tollervey D."/>
            <person name="Warren A.J."/>
            <person name="Williamson J.R."/>
            <person name="Wilson D."/>
            <person name="Yonath A."/>
            <person name="Yusupov M."/>
        </authorList>
    </citation>
    <scope>NOMENCLATURE</scope>
</reference>
<dbReference type="EMBL" id="M58459">
    <property type="protein sequence ID" value="AAA63256.1"/>
    <property type="molecule type" value="mRNA"/>
</dbReference>
<dbReference type="EMBL" id="AF041427">
    <property type="protein sequence ID" value="AAB96967.1"/>
    <property type="molecule type" value="Genomic_DNA"/>
</dbReference>
<dbReference type="EMBL" id="AF116711">
    <property type="protein sequence ID" value="AAF71131.1"/>
    <property type="molecule type" value="mRNA"/>
</dbReference>
<dbReference type="EMBL" id="AK292819">
    <property type="protein sequence ID" value="BAF85508.1"/>
    <property type="molecule type" value="mRNA"/>
</dbReference>
<dbReference type="EMBL" id="CH471115">
    <property type="protein sequence ID" value="EAX02771.1"/>
    <property type="molecule type" value="Genomic_DNA"/>
</dbReference>
<dbReference type="EMBL" id="BC010286">
    <property type="protein sequence ID" value="AAH10286.1"/>
    <property type="molecule type" value="mRNA"/>
</dbReference>
<dbReference type="CCDS" id="CCDS14773.1"/>
<dbReference type="PIR" id="A36338">
    <property type="entry name" value="R3HU4Y"/>
</dbReference>
<dbReference type="RefSeq" id="NP_000999.1">
    <property type="nucleotide sequence ID" value="NM_001008.4"/>
</dbReference>
<dbReference type="PDB" id="5AJ0">
    <property type="method" value="EM"/>
    <property type="resolution" value="3.50 A"/>
    <property type="chains" value="BE=1-263"/>
</dbReference>
<dbReference type="PDB" id="5FLX">
    <property type="method" value="EM"/>
    <property type="resolution" value="3.90 A"/>
    <property type="chains" value="E=1-263"/>
</dbReference>
<dbReference type="PDB" id="6OLG">
    <property type="method" value="EM"/>
    <property type="resolution" value="3.40 A"/>
    <property type="chains" value="BE=2-258"/>
</dbReference>
<dbReference type="PDB" id="6OLZ">
    <property type="method" value="EM"/>
    <property type="resolution" value="3.90 A"/>
    <property type="chains" value="BE=2-258"/>
</dbReference>
<dbReference type="PDBsum" id="5AJ0"/>
<dbReference type="PDBsum" id="5FLX"/>
<dbReference type="PDBsum" id="6OLG"/>
<dbReference type="PDBsum" id="6OLZ"/>
<dbReference type="SMR" id="P22090"/>
<dbReference type="BioGRID" id="112106">
    <property type="interactions" value="120"/>
</dbReference>
<dbReference type="CORUM" id="P22090"/>
<dbReference type="FunCoup" id="P22090">
    <property type="interactions" value="844"/>
</dbReference>
<dbReference type="IntAct" id="P22090">
    <property type="interactions" value="44"/>
</dbReference>
<dbReference type="MINT" id="P22090"/>
<dbReference type="STRING" id="9606.ENSP00000250784"/>
<dbReference type="GlyGen" id="P22090">
    <property type="glycosylation" value="1 site, 1 O-linked glycan (1 site)"/>
</dbReference>
<dbReference type="iPTMnet" id="P22090"/>
<dbReference type="MetOSite" id="P22090"/>
<dbReference type="PhosphoSitePlus" id="P22090"/>
<dbReference type="SwissPalm" id="P22090"/>
<dbReference type="BioMuta" id="RPS4Y1"/>
<dbReference type="DMDM" id="133948"/>
<dbReference type="jPOST" id="P22090"/>
<dbReference type="MassIVE" id="P22090"/>
<dbReference type="PeptideAtlas" id="P22090"/>
<dbReference type="ProteomicsDB" id="53960"/>
<dbReference type="Antibodypedia" id="594">
    <property type="antibodies" value="195 antibodies from 25 providers"/>
</dbReference>
<dbReference type="DNASU" id="6192"/>
<dbReference type="Ensembl" id="ENST00000250784.13">
    <property type="protein sequence ID" value="ENSP00000250784.7"/>
    <property type="gene ID" value="ENSG00000129824.16"/>
</dbReference>
<dbReference type="GeneID" id="6192"/>
<dbReference type="KEGG" id="hsa:6192"/>
<dbReference type="MANE-Select" id="ENST00000250784.13">
    <property type="protein sequence ID" value="ENSP00000250784.7"/>
    <property type="RefSeq nucleotide sequence ID" value="NM_001008.4"/>
    <property type="RefSeq protein sequence ID" value="NP_000999.1"/>
</dbReference>
<dbReference type="UCSC" id="uc004fqi.4">
    <property type="organism name" value="human"/>
</dbReference>
<dbReference type="AGR" id="HGNC:10425"/>
<dbReference type="CTD" id="6192"/>
<dbReference type="DisGeNET" id="6192"/>
<dbReference type="GeneCards" id="RPS4Y1"/>
<dbReference type="HGNC" id="HGNC:10425">
    <property type="gene designation" value="RPS4Y1"/>
</dbReference>
<dbReference type="HPA" id="ENSG00000129824">
    <property type="expression patterns" value="Low tissue specificity"/>
</dbReference>
<dbReference type="MIM" id="470000">
    <property type="type" value="gene"/>
</dbReference>
<dbReference type="neXtProt" id="NX_P22090"/>
<dbReference type="OpenTargets" id="ENSG00000129824"/>
<dbReference type="PharmGKB" id="PA34840"/>
<dbReference type="VEuPathDB" id="HostDB:ENSG00000129824"/>
<dbReference type="GeneTree" id="ENSGT00390000005569"/>
<dbReference type="InParanoid" id="P22090"/>
<dbReference type="OMA" id="WMLDELT"/>
<dbReference type="PAN-GO" id="P22090">
    <property type="GO annotations" value="4 GO annotations based on evolutionary models"/>
</dbReference>
<dbReference type="PhylomeDB" id="P22090"/>
<dbReference type="TreeFam" id="TF300612"/>
<dbReference type="PathwayCommons" id="P22090"/>
<dbReference type="Reactome" id="R-HSA-156827">
    <property type="pathway name" value="L13a-mediated translational silencing of Ceruloplasmin expression"/>
</dbReference>
<dbReference type="Reactome" id="R-HSA-156902">
    <property type="pathway name" value="Peptide chain elongation"/>
</dbReference>
<dbReference type="Reactome" id="R-HSA-1799339">
    <property type="pathway name" value="SRP-dependent cotranslational protein targeting to membrane"/>
</dbReference>
<dbReference type="Reactome" id="R-HSA-192823">
    <property type="pathway name" value="Viral mRNA Translation"/>
</dbReference>
<dbReference type="Reactome" id="R-HSA-2408557">
    <property type="pathway name" value="Selenocysteine synthesis"/>
</dbReference>
<dbReference type="Reactome" id="R-HSA-6791226">
    <property type="pathway name" value="Major pathway of rRNA processing in the nucleolus and cytosol"/>
</dbReference>
<dbReference type="Reactome" id="R-HSA-72649">
    <property type="pathway name" value="Translation initiation complex formation"/>
</dbReference>
<dbReference type="Reactome" id="R-HSA-72689">
    <property type="pathway name" value="Formation of a pool of free 40S subunits"/>
</dbReference>
<dbReference type="Reactome" id="R-HSA-72695">
    <property type="pathway name" value="Formation of the ternary complex, and subsequently, the 43S complex"/>
</dbReference>
<dbReference type="Reactome" id="R-HSA-72702">
    <property type="pathway name" value="Ribosomal scanning and start codon recognition"/>
</dbReference>
<dbReference type="Reactome" id="R-HSA-72706">
    <property type="pathway name" value="GTP hydrolysis and joining of the 60S ribosomal subunit"/>
</dbReference>
<dbReference type="Reactome" id="R-HSA-72764">
    <property type="pathway name" value="Eukaryotic Translation Termination"/>
</dbReference>
<dbReference type="Reactome" id="R-HSA-9010553">
    <property type="pathway name" value="Regulation of expression of SLITs and ROBOs"/>
</dbReference>
<dbReference type="Reactome" id="R-HSA-9633012">
    <property type="pathway name" value="Response of EIF2AK4 (GCN2) to amino acid deficiency"/>
</dbReference>
<dbReference type="Reactome" id="R-HSA-9735869">
    <property type="pathway name" value="SARS-CoV-1 modulates host translation machinery"/>
</dbReference>
<dbReference type="Reactome" id="R-HSA-9754678">
    <property type="pathway name" value="SARS-CoV-2 modulates host translation machinery"/>
</dbReference>
<dbReference type="Reactome" id="R-HSA-975956">
    <property type="pathway name" value="Nonsense Mediated Decay (NMD) independent of the Exon Junction Complex (EJC)"/>
</dbReference>
<dbReference type="Reactome" id="R-HSA-975957">
    <property type="pathway name" value="Nonsense Mediated Decay (NMD) enhanced by the Exon Junction Complex (EJC)"/>
</dbReference>
<dbReference type="SignaLink" id="P22090"/>
<dbReference type="SIGNOR" id="P22090"/>
<dbReference type="BioGRID-ORCS" id="6192">
    <property type="hits" value="12 hits in 760 CRISPR screens"/>
</dbReference>
<dbReference type="ChiTaRS" id="RPS4Y1">
    <property type="organism name" value="human"/>
</dbReference>
<dbReference type="GeneWiki" id="RPS4Y1"/>
<dbReference type="GenomeRNAi" id="6192"/>
<dbReference type="Pharos" id="P22090">
    <property type="development level" value="Tbio"/>
</dbReference>
<dbReference type="PRO" id="PR:P22090"/>
<dbReference type="Proteomes" id="UP000005640">
    <property type="component" value="Chromosome Y"/>
</dbReference>
<dbReference type="RNAct" id="P22090">
    <property type="molecule type" value="protein"/>
</dbReference>
<dbReference type="Bgee" id="ENSG00000129824">
    <property type="expression patterns" value="Expressed in upper leg skin and 201 other cell types or tissues"/>
</dbReference>
<dbReference type="ExpressionAtlas" id="P22090">
    <property type="expression patterns" value="baseline and differential"/>
</dbReference>
<dbReference type="GO" id="GO:0005829">
    <property type="term" value="C:cytosol"/>
    <property type="evidence" value="ECO:0000304"/>
    <property type="project" value="Reactome"/>
</dbReference>
<dbReference type="GO" id="GO:0022627">
    <property type="term" value="C:cytosolic small ribosomal subunit"/>
    <property type="evidence" value="ECO:0000318"/>
    <property type="project" value="GO_Central"/>
</dbReference>
<dbReference type="GO" id="GO:0016020">
    <property type="term" value="C:membrane"/>
    <property type="evidence" value="ECO:0007005"/>
    <property type="project" value="UniProtKB"/>
</dbReference>
<dbReference type="GO" id="GO:0005654">
    <property type="term" value="C:nucleoplasm"/>
    <property type="evidence" value="ECO:0000304"/>
    <property type="project" value="Reactome"/>
</dbReference>
<dbReference type="GO" id="GO:0005634">
    <property type="term" value="C:nucleus"/>
    <property type="evidence" value="ECO:0007005"/>
    <property type="project" value="UniProtKB"/>
</dbReference>
<dbReference type="GO" id="GO:0005840">
    <property type="term" value="C:ribosome"/>
    <property type="evidence" value="ECO:0000314"/>
    <property type="project" value="UniProtKB"/>
</dbReference>
<dbReference type="GO" id="GO:0003723">
    <property type="term" value="F:RNA binding"/>
    <property type="evidence" value="ECO:0000318"/>
    <property type="project" value="GO_Central"/>
</dbReference>
<dbReference type="GO" id="GO:0019843">
    <property type="term" value="F:rRNA binding"/>
    <property type="evidence" value="ECO:0007669"/>
    <property type="project" value="UniProtKB-KW"/>
</dbReference>
<dbReference type="GO" id="GO:0003735">
    <property type="term" value="F:structural constituent of ribosome"/>
    <property type="evidence" value="ECO:0000315"/>
    <property type="project" value="UniProtKB"/>
</dbReference>
<dbReference type="GO" id="GO:0006412">
    <property type="term" value="P:translation"/>
    <property type="evidence" value="ECO:0000315"/>
    <property type="project" value="UniProtKB"/>
</dbReference>
<dbReference type="CDD" id="cd06087">
    <property type="entry name" value="KOW_RPS4"/>
    <property type="match status" value="1"/>
</dbReference>
<dbReference type="CDD" id="cd00165">
    <property type="entry name" value="S4"/>
    <property type="match status" value="1"/>
</dbReference>
<dbReference type="FunFam" id="2.30.30.30:FF:000005">
    <property type="entry name" value="40S ribosomal protein S4"/>
    <property type="match status" value="1"/>
</dbReference>
<dbReference type="FunFam" id="2.40.50.740:FF:000001">
    <property type="entry name" value="40S ribosomal protein S4"/>
    <property type="match status" value="1"/>
</dbReference>
<dbReference type="FunFam" id="3.10.290.10:FF:000051">
    <property type="entry name" value="40S ribosomal protein S4, X isoform"/>
    <property type="match status" value="1"/>
</dbReference>
<dbReference type="Gene3D" id="2.30.30.30">
    <property type="match status" value="1"/>
</dbReference>
<dbReference type="Gene3D" id="2.40.50.740">
    <property type="match status" value="1"/>
</dbReference>
<dbReference type="Gene3D" id="3.10.290.10">
    <property type="entry name" value="RNA-binding S4 domain"/>
    <property type="match status" value="1"/>
</dbReference>
<dbReference type="HAMAP" id="MF_00485">
    <property type="entry name" value="Ribosomal_eS4"/>
    <property type="match status" value="1"/>
</dbReference>
<dbReference type="InterPro" id="IPR005824">
    <property type="entry name" value="KOW"/>
</dbReference>
<dbReference type="InterPro" id="IPR014722">
    <property type="entry name" value="Rib_uL2_dom2"/>
</dbReference>
<dbReference type="InterPro" id="IPR000876">
    <property type="entry name" value="Ribosomal_eS4"/>
</dbReference>
<dbReference type="InterPro" id="IPR032277">
    <property type="entry name" value="Ribosomal_eS4_C"/>
</dbReference>
<dbReference type="InterPro" id="IPR013845">
    <property type="entry name" value="Ribosomal_eS4_central_region"/>
</dbReference>
<dbReference type="InterPro" id="IPR038237">
    <property type="entry name" value="Ribosomal_eS4_central_sf"/>
</dbReference>
<dbReference type="InterPro" id="IPR041982">
    <property type="entry name" value="Ribosomal_eS4_KOW"/>
</dbReference>
<dbReference type="InterPro" id="IPR013843">
    <property type="entry name" value="Ribosomal_eS4_N"/>
</dbReference>
<dbReference type="InterPro" id="IPR018199">
    <property type="entry name" value="Ribosomal_eS4_N_CS"/>
</dbReference>
<dbReference type="InterPro" id="IPR002942">
    <property type="entry name" value="S4_RNA-bd"/>
</dbReference>
<dbReference type="InterPro" id="IPR036986">
    <property type="entry name" value="S4_RNA-bd_sf"/>
</dbReference>
<dbReference type="PANTHER" id="PTHR11581">
    <property type="entry name" value="30S/40S RIBOSOMAL PROTEIN S4"/>
    <property type="match status" value="1"/>
</dbReference>
<dbReference type="PANTHER" id="PTHR11581:SF8">
    <property type="entry name" value="SMALL RIBOSOMAL SUBUNIT PROTEIN ES4, Y ISOFORM 1"/>
    <property type="match status" value="1"/>
</dbReference>
<dbReference type="Pfam" id="PF16121">
    <property type="entry name" value="40S_S4_C"/>
    <property type="match status" value="1"/>
</dbReference>
<dbReference type="Pfam" id="PF00467">
    <property type="entry name" value="KOW"/>
    <property type="match status" value="1"/>
</dbReference>
<dbReference type="Pfam" id="PF00900">
    <property type="entry name" value="Ribosomal_S4e"/>
    <property type="match status" value="1"/>
</dbReference>
<dbReference type="Pfam" id="PF08071">
    <property type="entry name" value="RS4NT"/>
    <property type="match status" value="1"/>
</dbReference>
<dbReference type="PIRSF" id="PIRSF002116">
    <property type="entry name" value="Ribosomal_S4"/>
    <property type="match status" value="1"/>
</dbReference>
<dbReference type="SMART" id="SM00363">
    <property type="entry name" value="S4"/>
    <property type="match status" value="1"/>
</dbReference>
<dbReference type="PROSITE" id="PS00528">
    <property type="entry name" value="RIBOSOMAL_S4E"/>
    <property type="match status" value="1"/>
</dbReference>
<dbReference type="PROSITE" id="PS50889">
    <property type="entry name" value="S4"/>
    <property type="match status" value="1"/>
</dbReference>
<protein>
    <recommendedName>
        <fullName evidence="1">Small ribosomal subunit protein eS4, Y isoform 1</fullName>
    </recommendedName>
    <alternativeName>
        <fullName>40S ribosomal protein S4</fullName>
    </alternativeName>
</protein>
<name>RS4Y1_HUMAN</name>
<comment type="similarity">
    <text evidence="2">Belongs to the eukaryotic ribosomal protein eS4 family.</text>
</comment>
<organism>
    <name type="scientific">Homo sapiens</name>
    <name type="common">Human</name>
    <dbReference type="NCBI Taxonomy" id="9606"/>
    <lineage>
        <taxon>Eukaryota</taxon>
        <taxon>Metazoa</taxon>
        <taxon>Chordata</taxon>
        <taxon>Craniata</taxon>
        <taxon>Vertebrata</taxon>
        <taxon>Euteleostomi</taxon>
        <taxon>Mammalia</taxon>
        <taxon>Eutheria</taxon>
        <taxon>Euarchontoglires</taxon>
        <taxon>Primates</taxon>
        <taxon>Haplorrhini</taxon>
        <taxon>Catarrhini</taxon>
        <taxon>Hominidae</taxon>
        <taxon>Homo</taxon>
    </lineage>
</organism>